<comment type="miscellaneous">
    <text>It is not know if this bacteria is hemolytic.</text>
</comment>
<comment type="similarity">
    <text evidence="2">Belongs to the UPF0053 family. Hemolysin C subfamily.</text>
</comment>
<organism>
    <name type="scientific">Rickettsia bellii (strain OSU 85-389)</name>
    <dbReference type="NCBI Taxonomy" id="391896"/>
    <lineage>
        <taxon>Bacteria</taxon>
        <taxon>Pseudomonadati</taxon>
        <taxon>Pseudomonadota</taxon>
        <taxon>Alphaproteobacteria</taxon>
        <taxon>Rickettsiales</taxon>
        <taxon>Rickettsiaceae</taxon>
        <taxon>Rickettsieae</taxon>
        <taxon>Rickettsia</taxon>
        <taxon>belli group</taxon>
    </lineage>
</organism>
<keyword id="KW-0129">CBS domain</keyword>
<keyword id="KW-0677">Repeat</keyword>
<dbReference type="EMBL" id="CP000849">
    <property type="protein sequence ID" value="ABV78467.1"/>
    <property type="molecule type" value="Genomic_DNA"/>
</dbReference>
<dbReference type="RefSeq" id="WP_012151505.1">
    <property type="nucleotide sequence ID" value="NC_009883.1"/>
</dbReference>
<dbReference type="SMR" id="A8GUH1"/>
<dbReference type="KEGG" id="rbo:A1I_00305"/>
<dbReference type="HOGENOM" id="CLU_015237_3_1_5"/>
<dbReference type="GO" id="GO:0005886">
    <property type="term" value="C:plasma membrane"/>
    <property type="evidence" value="ECO:0007669"/>
    <property type="project" value="TreeGrafter"/>
</dbReference>
<dbReference type="GO" id="GO:0050660">
    <property type="term" value="F:flavin adenine dinucleotide binding"/>
    <property type="evidence" value="ECO:0007669"/>
    <property type="project" value="InterPro"/>
</dbReference>
<dbReference type="CDD" id="cd04590">
    <property type="entry name" value="CBS_pair_CorC_HlyC_assoc"/>
    <property type="match status" value="1"/>
</dbReference>
<dbReference type="FunFam" id="3.10.580.10:FF:000002">
    <property type="entry name" value="Magnesium/cobalt efflux protein CorC"/>
    <property type="match status" value="1"/>
</dbReference>
<dbReference type="Gene3D" id="3.30.465.10">
    <property type="match status" value="1"/>
</dbReference>
<dbReference type="Gene3D" id="3.10.580.10">
    <property type="entry name" value="CBS-domain"/>
    <property type="match status" value="1"/>
</dbReference>
<dbReference type="InterPro" id="IPR000644">
    <property type="entry name" value="CBS_dom"/>
</dbReference>
<dbReference type="InterPro" id="IPR046342">
    <property type="entry name" value="CBS_dom_sf"/>
</dbReference>
<dbReference type="InterPro" id="IPR036318">
    <property type="entry name" value="FAD-bd_PCMH-like_sf"/>
</dbReference>
<dbReference type="InterPro" id="IPR016169">
    <property type="entry name" value="FAD-bd_PCMH_sub2"/>
</dbReference>
<dbReference type="InterPro" id="IPR044751">
    <property type="entry name" value="Ion_transp-like_CBS"/>
</dbReference>
<dbReference type="InterPro" id="IPR005170">
    <property type="entry name" value="Transptr-assoc_dom"/>
</dbReference>
<dbReference type="PANTHER" id="PTHR22777">
    <property type="entry name" value="HEMOLYSIN-RELATED"/>
    <property type="match status" value="1"/>
</dbReference>
<dbReference type="PANTHER" id="PTHR22777:SF27">
    <property type="entry name" value="MAGNESIUM AND COBALT EFFLUX PROTEIN CORC"/>
    <property type="match status" value="1"/>
</dbReference>
<dbReference type="Pfam" id="PF00571">
    <property type="entry name" value="CBS"/>
    <property type="match status" value="1"/>
</dbReference>
<dbReference type="Pfam" id="PF03471">
    <property type="entry name" value="CorC_HlyC"/>
    <property type="match status" value="1"/>
</dbReference>
<dbReference type="SMART" id="SM01091">
    <property type="entry name" value="CorC_HlyC"/>
    <property type="match status" value="1"/>
</dbReference>
<dbReference type="SUPFAM" id="SSF54631">
    <property type="entry name" value="CBS-domain pair"/>
    <property type="match status" value="1"/>
</dbReference>
<dbReference type="SUPFAM" id="SSF56176">
    <property type="entry name" value="FAD-binding/transporter-associated domain-like"/>
    <property type="match status" value="1"/>
</dbReference>
<dbReference type="PROSITE" id="PS51371">
    <property type="entry name" value="CBS"/>
    <property type="match status" value="2"/>
</dbReference>
<proteinExistence type="inferred from homology"/>
<protein>
    <recommendedName>
        <fullName>Possible hemolysin C</fullName>
    </recommendedName>
</protein>
<gene>
    <name type="primary">tlyC</name>
    <name type="ordered locus">A1I_00305</name>
</gene>
<evidence type="ECO:0000255" key="1">
    <source>
        <dbReference type="PROSITE-ProRule" id="PRU00703"/>
    </source>
</evidence>
<evidence type="ECO:0000305" key="2"/>
<sequence length="302" mass="34234">MLKSSKKEDDSKKNHDNKSIFHLRKLFSPIKSLFSNKVPDDFFSVIKRLKTNSQKMTLDERNILANLLKLKGKTIEDIMVPRSDIAAIKLTTNIEELNESIKVKIPHTRTLIYDGTLDNIVGFIHIKDLFKALVTKQNFRLKKLIRKHIIAAPSMKLLDLLAKMRREKTHIAIVIDEYGGTDGLVTIEDVMEALVGRIDDEHDQKSEYDNYKVINNSTIISNARVEVEVLEEIIGEKLKDDDDDEFDTIGGLVLTKMGNVPAVGTKINVSENIEIEVTDANPRSLKQVKITLKNSLKRAKSS</sequence>
<name>HLYC_RICB8</name>
<accession>A8GUH1</accession>
<feature type="chain" id="PRO_0000319027" description="Possible hemolysin C">
    <location>
        <begin position="1"/>
        <end position="302"/>
    </location>
</feature>
<feature type="domain" description="CBS 1" evidence="1">
    <location>
        <begin position="79"/>
        <end position="141"/>
    </location>
</feature>
<feature type="domain" description="CBS 2" evidence="1">
    <location>
        <begin position="144"/>
        <end position="201"/>
    </location>
</feature>
<reference key="1">
    <citation type="submission" date="2007-09" db="EMBL/GenBank/DDBJ databases">
        <title>Complete genome sequencing of Rickettsia bellii.</title>
        <authorList>
            <person name="Madan A."/>
            <person name="Lee H."/>
            <person name="Madan A."/>
            <person name="Yoon J.-G."/>
            <person name="Ryu G.-Y."/>
            <person name="Dasch G."/>
            <person name="Ereemeva M."/>
        </authorList>
    </citation>
    <scope>NUCLEOTIDE SEQUENCE [LARGE SCALE GENOMIC DNA]</scope>
    <source>
        <strain>OSU 85-389</strain>
    </source>
</reference>